<feature type="chain" id="PRO_0000192251" description="Ribosomal protein L11 methyltransferase">
    <location>
        <begin position="1"/>
        <end position="298"/>
    </location>
</feature>
<feature type="binding site" evidence="1">
    <location>
        <position position="150"/>
    </location>
    <ligand>
        <name>S-adenosyl-L-methionine</name>
        <dbReference type="ChEBI" id="CHEBI:59789"/>
    </ligand>
</feature>
<feature type="binding site" evidence="1">
    <location>
        <position position="171"/>
    </location>
    <ligand>
        <name>S-adenosyl-L-methionine</name>
        <dbReference type="ChEBI" id="CHEBI:59789"/>
    </ligand>
</feature>
<feature type="binding site" evidence="1">
    <location>
        <position position="193"/>
    </location>
    <ligand>
        <name>S-adenosyl-L-methionine</name>
        <dbReference type="ChEBI" id="CHEBI:59789"/>
    </ligand>
</feature>
<feature type="binding site" evidence="1">
    <location>
        <position position="232"/>
    </location>
    <ligand>
        <name>S-adenosyl-L-methionine</name>
        <dbReference type="ChEBI" id="CHEBI:59789"/>
    </ligand>
</feature>
<comment type="function">
    <text evidence="1">Methylates ribosomal protein L11.</text>
</comment>
<comment type="catalytic activity">
    <reaction evidence="1">
        <text>L-lysyl-[protein] + 3 S-adenosyl-L-methionine = N(6),N(6),N(6)-trimethyl-L-lysyl-[protein] + 3 S-adenosyl-L-homocysteine + 3 H(+)</text>
        <dbReference type="Rhea" id="RHEA:54192"/>
        <dbReference type="Rhea" id="RHEA-COMP:9752"/>
        <dbReference type="Rhea" id="RHEA-COMP:13826"/>
        <dbReference type="ChEBI" id="CHEBI:15378"/>
        <dbReference type="ChEBI" id="CHEBI:29969"/>
        <dbReference type="ChEBI" id="CHEBI:57856"/>
        <dbReference type="ChEBI" id="CHEBI:59789"/>
        <dbReference type="ChEBI" id="CHEBI:61961"/>
    </reaction>
</comment>
<comment type="subcellular location">
    <subcellularLocation>
        <location evidence="1">Cytoplasm</location>
    </subcellularLocation>
</comment>
<comment type="similarity">
    <text evidence="1">Belongs to the methyltransferase superfamily. PrmA family.</text>
</comment>
<evidence type="ECO:0000255" key="1">
    <source>
        <dbReference type="HAMAP-Rule" id="MF_00735"/>
    </source>
</evidence>
<organism>
    <name type="scientific">Chromobacterium violaceum (strain ATCC 12472 / DSM 30191 / JCM 1249 / CCUG 213 / NBRC 12614 / NCIMB 9131 / NCTC 9757 / MK)</name>
    <dbReference type="NCBI Taxonomy" id="243365"/>
    <lineage>
        <taxon>Bacteria</taxon>
        <taxon>Pseudomonadati</taxon>
        <taxon>Pseudomonadota</taxon>
        <taxon>Betaproteobacteria</taxon>
        <taxon>Neisseriales</taxon>
        <taxon>Chromobacteriaceae</taxon>
        <taxon>Chromobacterium</taxon>
    </lineage>
</organism>
<protein>
    <recommendedName>
        <fullName evidence="1">Ribosomal protein L11 methyltransferase</fullName>
        <shortName evidence="1">L11 Mtase</shortName>
        <ecNumber evidence="1">2.1.1.-</ecNumber>
    </recommendedName>
</protein>
<reference key="1">
    <citation type="journal article" date="2003" name="Proc. Natl. Acad. Sci. U.S.A.">
        <title>The complete genome sequence of Chromobacterium violaceum reveals remarkable and exploitable bacterial adaptability.</title>
        <authorList>
            <person name="Vasconcelos A.T.R."/>
            <person name="de Almeida D.F."/>
            <person name="Hungria M."/>
            <person name="Guimaraes C.T."/>
            <person name="Antonio R.V."/>
            <person name="Almeida F.C."/>
            <person name="de Almeida L.G.P."/>
            <person name="de Almeida R."/>
            <person name="Alves-Gomes J.A."/>
            <person name="Andrade E.M."/>
            <person name="Araripe J."/>
            <person name="de Araujo M.F.F."/>
            <person name="Astolfi-Filho S."/>
            <person name="Azevedo V."/>
            <person name="Baptista A.J."/>
            <person name="Bataus L.A.M."/>
            <person name="Batista J.S."/>
            <person name="Belo A."/>
            <person name="van den Berg C."/>
            <person name="Bogo M."/>
            <person name="Bonatto S."/>
            <person name="Bordignon J."/>
            <person name="Brigido M.M."/>
            <person name="Brito C.A."/>
            <person name="Brocchi M."/>
            <person name="Burity H.A."/>
            <person name="Camargo A.A."/>
            <person name="Cardoso D.D.P."/>
            <person name="Carneiro N.P."/>
            <person name="Carraro D.M."/>
            <person name="Carvalho C.M.B."/>
            <person name="Cascardo J.C.M."/>
            <person name="Cavada B.S."/>
            <person name="Chueire L.M.O."/>
            <person name="Creczynski-Pasa T.B."/>
            <person name="Cunha-Junior N.C."/>
            <person name="Fagundes N."/>
            <person name="Falcao C.L."/>
            <person name="Fantinatti F."/>
            <person name="Farias I.P."/>
            <person name="Felipe M.S.S."/>
            <person name="Ferrari L.P."/>
            <person name="Ferro J.A."/>
            <person name="Ferro M.I.T."/>
            <person name="Franco G.R."/>
            <person name="Freitas N.S.A."/>
            <person name="Furlan L.R."/>
            <person name="Gazzinelli R.T."/>
            <person name="Gomes E.A."/>
            <person name="Goncalves P.R."/>
            <person name="Grangeiro T.B."/>
            <person name="Grattapaglia D."/>
            <person name="Grisard E.C."/>
            <person name="Hanna E.S."/>
            <person name="Jardim S.N."/>
            <person name="Laurino J."/>
            <person name="Leoi L.C.T."/>
            <person name="Lima L.F.A."/>
            <person name="Loureiro M.F."/>
            <person name="Lyra M.C.C.P."/>
            <person name="Madeira H.M.F."/>
            <person name="Manfio G.P."/>
            <person name="Maranhao A.Q."/>
            <person name="Martins W.S."/>
            <person name="di Mauro S.M.Z."/>
            <person name="de Medeiros S.R.B."/>
            <person name="Meissner R.V."/>
            <person name="Moreira M.A.M."/>
            <person name="Nascimento F.F."/>
            <person name="Nicolas M.F."/>
            <person name="Oliveira J.G."/>
            <person name="Oliveira S.C."/>
            <person name="Paixao R.F.C."/>
            <person name="Parente J.A."/>
            <person name="Pedrosa F.O."/>
            <person name="Pena S.D.J."/>
            <person name="Pereira J.O."/>
            <person name="Pereira M."/>
            <person name="Pinto L.S.R.C."/>
            <person name="Pinto L.S."/>
            <person name="Porto J.I.R."/>
            <person name="Potrich D.P."/>
            <person name="Ramalho-Neto C.E."/>
            <person name="Reis A.M.M."/>
            <person name="Rigo L.U."/>
            <person name="Rondinelli E."/>
            <person name="Santos E.B.P."/>
            <person name="Santos F.R."/>
            <person name="Schneider M.P.C."/>
            <person name="Seuanez H.N."/>
            <person name="Silva A.M.R."/>
            <person name="da Silva A.L.C."/>
            <person name="Silva D.W."/>
            <person name="Silva R."/>
            <person name="Simoes I.C."/>
            <person name="Simon D."/>
            <person name="Soares C.M.A."/>
            <person name="Soares R.B.A."/>
            <person name="Souza E.M."/>
            <person name="Souza K.R.L."/>
            <person name="Souza R.C."/>
            <person name="Steffens M.B.R."/>
            <person name="Steindel M."/>
            <person name="Teixeira S.R."/>
            <person name="Urmenyi T."/>
            <person name="Vettore A."/>
            <person name="Wassem R."/>
            <person name="Zaha A."/>
            <person name="Simpson A.J.G."/>
        </authorList>
    </citation>
    <scope>NUCLEOTIDE SEQUENCE [LARGE SCALE GENOMIC DNA]</scope>
    <source>
        <strain>ATCC 12472 / DSM 30191 / JCM 1249 / CCUG 213 / NBRC 12614 / NCIMB 9131 / NCTC 9757 / MK</strain>
    </source>
</reference>
<gene>
    <name evidence="1" type="primary">prmA</name>
    <name type="ordered locus">CV_0984</name>
</gene>
<accession>P60091</accession>
<accession>Q7NZD8</accession>
<name>PRMA_CHRVO</name>
<dbReference type="EC" id="2.1.1.-" evidence="1"/>
<dbReference type="EMBL" id="AE016825">
    <property type="protein sequence ID" value="AAQ58658.1"/>
    <property type="molecule type" value="Genomic_DNA"/>
</dbReference>
<dbReference type="RefSeq" id="WP_011134539.1">
    <property type="nucleotide sequence ID" value="NC_005085.1"/>
</dbReference>
<dbReference type="SMR" id="P60091"/>
<dbReference type="STRING" id="243365.CV_0984"/>
<dbReference type="GeneID" id="66366675"/>
<dbReference type="KEGG" id="cvi:CV_0984"/>
<dbReference type="eggNOG" id="COG2264">
    <property type="taxonomic scope" value="Bacteria"/>
</dbReference>
<dbReference type="HOGENOM" id="CLU_049382_4_1_4"/>
<dbReference type="OrthoDB" id="9785995at2"/>
<dbReference type="Proteomes" id="UP000001424">
    <property type="component" value="Chromosome"/>
</dbReference>
<dbReference type="GO" id="GO:0005829">
    <property type="term" value="C:cytosol"/>
    <property type="evidence" value="ECO:0007669"/>
    <property type="project" value="TreeGrafter"/>
</dbReference>
<dbReference type="GO" id="GO:0016279">
    <property type="term" value="F:protein-lysine N-methyltransferase activity"/>
    <property type="evidence" value="ECO:0007669"/>
    <property type="project" value="TreeGrafter"/>
</dbReference>
<dbReference type="GO" id="GO:0032259">
    <property type="term" value="P:methylation"/>
    <property type="evidence" value="ECO:0007669"/>
    <property type="project" value="UniProtKB-KW"/>
</dbReference>
<dbReference type="CDD" id="cd02440">
    <property type="entry name" value="AdoMet_MTases"/>
    <property type="match status" value="1"/>
</dbReference>
<dbReference type="Gene3D" id="3.40.50.150">
    <property type="entry name" value="Vaccinia Virus protein VP39"/>
    <property type="match status" value="1"/>
</dbReference>
<dbReference type="HAMAP" id="MF_00735">
    <property type="entry name" value="Methyltr_PrmA"/>
    <property type="match status" value="1"/>
</dbReference>
<dbReference type="InterPro" id="IPR050078">
    <property type="entry name" value="Ribosomal_L11_MeTrfase_PrmA"/>
</dbReference>
<dbReference type="InterPro" id="IPR004498">
    <property type="entry name" value="Ribosomal_PrmA_MeTrfase"/>
</dbReference>
<dbReference type="InterPro" id="IPR029063">
    <property type="entry name" value="SAM-dependent_MTases_sf"/>
</dbReference>
<dbReference type="NCBIfam" id="TIGR00406">
    <property type="entry name" value="prmA"/>
    <property type="match status" value="1"/>
</dbReference>
<dbReference type="PANTHER" id="PTHR43648">
    <property type="entry name" value="ELECTRON TRANSFER FLAVOPROTEIN BETA SUBUNIT LYSINE METHYLTRANSFERASE"/>
    <property type="match status" value="1"/>
</dbReference>
<dbReference type="PANTHER" id="PTHR43648:SF1">
    <property type="entry name" value="ELECTRON TRANSFER FLAVOPROTEIN BETA SUBUNIT LYSINE METHYLTRANSFERASE"/>
    <property type="match status" value="1"/>
</dbReference>
<dbReference type="Pfam" id="PF06325">
    <property type="entry name" value="PrmA"/>
    <property type="match status" value="1"/>
</dbReference>
<dbReference type="PIRSF" id="PIRSF000401">
    <property type="entry name" value="RPL11_MTase"/>
    <property type="match status" value="1"/>
</dbReference>
<dbReference type="SUPFAM" id="SSF53335">
    <property type="entry name" value="S-adenosyl-L-methionine-dependent methyltransferases"/>
    <property type="match status" value="1"/>
</dbReference>
<sequence length="298" mass="32112">MAWLQATIDSDSAVAERLADALMDAGALSTAIEDAWAGTDKEQPIFGEPGEPVDQLWSQSRIITLFDESADVALLIAAAANACQLAMPAYSVERVEEQDWVRLTQSQFEPIRISDRLWITPTWHEAPAPNAVNLQLDPGLAFGTGSHPTTRLCLQWLDKQLQGNESVLDYGCGSGILAIAALKLGAASAVGIDIDQQAVRASQDNAEQNGVKADFFLPNANPAAQYDVVLANILANPLRMLGDLLASHVKTGGRIVLSGILAEQADELSAIYSQWFEMDPPVFDEGWTRLTGTRRAAV</sequence>
<proteinExistence type="inferred from homology"/>
<keyword id="KW-0963">Cytoplasm</keyword>
<keyword id="KW-0489">Methyltransferase</keyword>
<keyword id="KW-1185">Reference proteome</keyword>
<keyword id="KW-0949">S-adenosyl-L-methionine</keyword>
<keyword id="KW-0808">Transferase</keyword>